<feature type="chain" id="PRO_0000081626" description="Meiosis protein mei2">
    <location>
        <begin position="1"/>
        <end position="750"/>
    </location>
</feature>
<feature type="domain" description="RRM 1" evidence="1">
    <location>
        <begin position="195"/>
        <end position="270"/>
    </location>
</feature>
<feature type="domain" description="RRM 2" evidence="1">
    <location>
        <begin position="293"/>
        <end position="361"/>
    </location>
</feature>
<feature type="region of interest" description="Disordered" evidence="2">
    <location>
        <begin position="1"/>
        <end position="20"/>
    </location>
</feature>
<feature type="compositionally biased region" description="Polar residues" evidence="2">
    <location>
        <begin position="7"/>
        <end position="20"/>
    </location>
</feature>
<feature type="helix" evidence="3">
    <location>
        <begin position="586"/>
        <end position="590"/>
    </location>
</feature>
<feature type="strand" evidence="3">
    <location>
        <begin position="598"/>
        <end position="602"/>
    </location>
</feature>
<feature type="helix" evidence="3">
    <location>
        <begin position="610"/>
        <end position="621"/>
    </location>
</feature>
<feature type="strand" evidence="3">
    <location>
        <begin position="624"/>
        <end position="633"/>
    </location>
</feature>
<feature type="turn" evidence="3">
    <location>
        <begin position="634"/>
        <end position="637"/>
    </location>
</feature>
<feature type="strand" evidence="3">
    <location>
        <begin position="638"/>
        <end position="649"/>
    </location>
</feature>
<feature type="helix" evidence="3">
    <location>
        <begin position="651"/>
        <end position="660"/>
    </location>
</feature>
<feature type="strand" evidence="4">
    <location>
        <begin position="663"/>
        <end position="666"/>
    </location>
</feature>
<feature type="strand" evidence="4">
    <location>
        <begin position="669"/>
        <end position="673"/>
    </location>
</feature>
<feature type="strand" evidence="3">
    <location>
        <begin position="675"/>
        <end position="678"/>
    </location>
</feature>
<feature type="helix" evidence="3">
    <location>
        <begin position="684"/>
        <end position="691"/>
    </location>
</feature>
<feature type="helix" evidence="3">
    <location>
        <begin position="695"/>
        <end position="698"/>
    </location>
</feature>
<feature type="helix" evidence="3">
    <location>
        <begin position="701"/>
        <end position="703"/>
    </location>
</feature>
<feature type="strand" evidence="3">
    <location>
        <begin position="706"/>
        <end position="708"/>
    </location>
</feature>
<feature type="turn" evidence="3">
    <location>
        <begin position="713"/>
        <end position="716"/>
    </location>
</feature>
<feature type="strand" evidence="4">
    <location>
        <begin position="717"/>
        <end position="719"/>
    </location>
</feature>
<organism>
    <name type="scientific">Schizosaccharomyces pombe (strain 972 / ATCC 24843)</name>
    <name type="common">Fission yeast</name>
    <dbReference type="NCBI Taxonomy" id="284812"/>
    <lineage>
        <taxon>Eukaryota</taxon>
        <taxon>Fungi</taxon>
        <taxon>Dikarya</taxon>
        <taxon>Ascomycota</taxon>
        <taxon>Taphrinomycotina</taxon>
        <taxon>Schizosaccharomycetes</taxon>
        <taxon>Schizosaccharomycetales</taxon>
        <taxon>Schizosaccharomycetaceae</taxon>
        <taxon>Schizosaccharomyces</taxon>
    </lineage>
</organism>
<comment type="function">
    <text>Crucial for commitment to meiosis but it is not sufficient itself for the commitment. May be a splicing regulator.</text>
</comment>
<comment type="subunit">
    <text>Binds rad24 when phosphorylated.</text>
</comment>
<comment type="induction">
    <text>By nitrogen starvation.</text>
</comment>
<comment type="PTM">
    <text>Inactivated by phosphorylation by ran1/pat1.</text>
</comment>
<comment type="miscellaneous">
    <text>The expression of mei2 protein is negatively controlled by cAMP.</text>
</comment>
<accession>P08965</accession>
<evidence type="ECO:0000255" key="1">
    <source>
        <dbReference type="PROSITE-ProRule" id="PRU00176"/>
    </source>
</evidence>
<evidence type="ECO:0000256" key="2">
    <source>
        <dbReference type="SAM" id="MobiDB-lite"/>
    </source>
</evidence>
<evidence type="ECO:0007829" key="3">
    <source>
        <dbReference type="PDB" id="6YYL"/>
    </source>
</evidence>
<evidence type="ECO:0007829" key="4">
    <source>
        <dbReference type="PDB" id="7EIU"/>
    </source>
</evidence>
<reference key="1">
    <citation type="journal article" date="1988" name="EMBO J.">
        <title>The S.pombe mei2 gene encoding a crucial molecule for commitment to meiosis is under the regulation of cAMP.</title>
        <authorList>
            <person name="Watanabe Y."/>
            <person name="Iino Y."/>
            <person name="Furuhata K."/>
            <person name="Shimoda C."/>
            <person name="Yamamoto M."/>
        </authorList>
    </citation>
    <scope>NUCLEOTIDE SEQUENCE [GENOMIC DNA]</scope>
</reference>
<reference key="2">
    <citation type="journal article" date="2002" name="Nature">
        <title>The genome sequence of Schizosaccharomyces pombe.</title>
        <authorList>
            <person name="Wood V."/>
            <person name="Gwilliam R."/>
            <person name="Rajandream M.A."/>
            <person name="Lyne M.H."/>
            <person name="Lyne R."/>
            <person name="Stewart A."/>
            <person name="Sgouros J.G."/>
            <person name="Peat N."/>
            <person name="Hayles J."/>
            <person name="Baker S.G."/>
            <person name="Basham D."/>
            <person name="Bowman S."/>
            <person name="Brooks K."/>
            <person name="Brown D."/>
            <person name="Brown S."/>
            <person name="Chillingworth T."/>
            <person name="Churcher C.M."/>
            <person name="Collins M."/>
            <person name="Connor R."/>
            <person name="Cronin A."/>
            <person name="Davis P."/>
            <person name="Feltwell T."/>
            <person name="Fraser A."/>
            <person name="Gentles S."/>
            <person name="Goble A."/>
            <person name="Hamlin N."/>
            <person name="Harris D.E."/>
            <person name="Hidalgo J."/>
            <person name="Hodgson G."/>
            <person name="Holroyd S."/>
            <person name="Hornsby T."/>
            <person name="Howarth S."/>
            <person name="Huckle E.J."/>
            <person name="Hunt S."/>
            <person name="Jagels K."/>
            <person name="James K.D."/>
            <person name="Jones L."/>
            <person name="Jones M."/>
            <person name="Leather S."/>
            <person name="McDonald S."/>
            <person name="McLean J."/>
            <person name="Mooney P."/>
            <person name="Moule S."/>
            <person name="Mungall K.L."/>
            <person name="Murphy L.D."/>
            <person name="Niblett D."/>
            <person name="Odell C."/>
            <person name="Oliver K."/>
            <person name="O'Neil S."/>
            <person name="Pearson D."/>
            <person name="Quail M.A."/>
            <person name="Rabbinowitsch E."/>
            <person name="Rutherford K.M."/>
            <person name="Rutter S."/>
            <person name="Saunders D."/>
            <person name="Seeger K."/>
            <person name="Sharp S."/>
            <person name="Skelton J."/>
            <person name="Simmonds M.N."/>
            <person name="Squares R."/>
            <person name="Squares S."/>
            <person name="Stevens K."/>
            <person name="Taylor K."/>
            <person name="Taylor R.G."/>
            <person name="Tivey A."/>
            <person name="Walsh S.V."/>
            <person name="Warren T."/>
            <person name="Whitehead S."/>
            <person name="Woodward J.R."/>
            <person name="Volckaert G."/>
            <person name="Aert R."/>
            <person name="Robben J."/>
            <person name="Grymonprez B."/>
            <person name="Weltjens I."/>
            <person name="Vanstreels E."/>
            <person name="Rieger M."/>
            <person name="Schaefer M."/>
            <person name="Mueller-Auer S."/>
            <person name="Gabel C."/>
            <person name="Fuchs M."/>
            <person name="Duesterhoeft A."/>
            <person name="Fritzc C."/>
            <person name="Holzer E."/>
            <person name="Moestl D."/>
            <person name="Hilbert H."/>
            <person name="Borzym K."/>
            <person name="Langer I."/>
            <person name="Beck A."/>
            <person name="Lehrach H."/>
            <person name="Reinhardt R."/>
            <person name="Pohl T.M."/>
            <person name="Eger P."/>
            <person name="Zimmermann W."/>
            <person name="Wedler H."/>
            <person name="Wambutt R."/>
            <person name="Purnelle B."/>
            <person name="Goffeau A."/>
            <person name="Cadieu E."/>
            <person name="Dreano S."/>
            <person name="Gloux S."/>
            <person name="Lelaure V."/>
            <person name="Mottier S."/>
            <person name="Galibert F."/>
            <person name="Aves S.J."/>
            <person name="Xiang Z."/>
            <person name="Hunt C."/>
            <person name="Moore K."/>
            <person name="Hurst S.M."/>
            <person name="Lucas M."/>
            <person name="Rochet M."/>
            <person name="Gaillardin C."/>
            <person name="Tallada V.A."/>
            <person name="Garzon A."/>
            <person name="Thode G."/>
            <person name="Daga R.R."/>
            <person name="Cruzado L."/>
            <person name="Jimenez J."/>
            <person name="Sanchez M."/>
            <person name="del Rey F."/>
            <person name="Benito J."/>
            <person name="Dominguez A."/>
            <person name="Revuelta J.L."/>
            <person name="Moreno S."/>
            <person name="Armstrong J."/>
            <person name="Forsburg S.L."/>
            <person name="Cerutti L."/>
            <person name="Lowe T."/>
            <person name="McCombie W.R."/>
            <person name="Paulsen I."/>
            <person name="Potashkin J."/>
            <person name="Shpakovski G.V."/>
            <person name="Ussery D."/>
            <person name="Barrell B.G."/>
            <person name="Nurse P."/>
        </authorList>
    </citation>
    <scope>NUCLEOTIDE SEQUENCE [LARGE SCALE GENOMIC DNA]</scope>
    <source>
        <strain>972 / ATCC 24843</strain>
    </source>
</reference>
<reference key="3">
    <citation type="journal article" date="2002" name="Curr. Biol.">
        <title>14-3-3 protein interferes with the binding of RNA to the phosphorylated form of fission yeast meiotic regulator Mei2p.</title>
        <authorList>
            <person name="Sato M."/>
            <person name="Watanabe Y."/>
            <person name="Akiyoshi Y."/>
            <person name="Yamamoto M."/>
        </authorList>
    </citation>
    <scope>INTERACTION WITH RAD24</scope>
</reference>
<dbReference type="EMBL" id="X07180">
    <property type="protein sequence ID" value="CAA30165.1"/>
    <property type="molecule type" value="Genomic_DNA"/>
</dbReference>
<dbReference type="EMBL" id="CU329670">
    <property type="protein sequence ID" value="CAA15822.1"/>
    <property type="molecule type" value="Genomic_DNA"/>
</dbReference>
<dbReference type="PIR" id="S00391">
    <property type="entry name" value="COZPME"/>
</dbReference>
<dbReference type="RefSeq" id="NP_594609.1">
    <property type="nucleotide sequence ID" value="NM_001020037.2"/>
</dbReference>
<dbReference type="PDB" id="6YYL">
    <property type="method" value="X-ray"/>
    <property type="resolution" value="1.89 A"/>
    <property type="chains" value="A/C=579-750"/>
</dbReference>
<dbReference type="PDB" id="6YYM">
    <property type="method" value="X-ray"/>
    <property type="resolution" value="2.63 A"/>
    <property type="chains" value="A=579-750"/>
</dbReference>
<dbReference type="PDB" id="7DUS">
    <property type="method" value="X-ray"/>
    <property type="resolution" value="2.50 A"/>
    <property type="chains" value="A=560-712"/>
</dbReference>
<dbReference type="PDB" id="7EIO">
    <property type="method" value="X-ray"/>
    <property type="resolution" value="1.90 A"/>
    <property type="chains" value="A/B=580-733"/>
</dbReference>
<dbReference type="PDB" id="7EIU">
    <property type="method" value="X-ray"/>
    <property type="resolution" value="2.35 A"/>
    <property type="chains" value="A/B=580-733"/>
</dbReference>
<dbReference type="PDBsum" id="6YYL"/>
<dbReference type="PDBsum" id="6YYM"/>
<dbReference type="PDBsum" id="7DUS"/>
<dbReference type="PDBsum" id="7EIO"/>
<dbReference type="PDBsum" id="7EIU"/>
<dbReference type="SMR" id="P08965"/>
<dbReference type="BioGRID" id="278557">
    <property type="interactions" value="42"/>
</dbReference>
<dbReference type="FunCoup" id="P08965">
    <property type="interactions" value="14"/>
</dbReference>
<dbReference type="IntAct" id="P08965">
    <property type="interactions" value="1"/>
</dbReference>
<dbReference type="STRING" id="284812.P08965"/>
<dbReference type="iPTMnet" id="P08965"/>
<dbReference type="PaxDb" id="4896-SPAC27D7.03c.1"/>
<dbReference type="EnsemblFungi" id="SPAC27D7.03c.1">
    <property type="protein sequence ID" value="SPAC27D7.03c.1:pep"/>
    <property type="gene ID" value="SPAC27D7.03c"/>
</dbReference>
<dbReference type="GeneID" id="2542080"/>
<dbReference type="KEGG" id="spo:2542080"/>
<dbReference type="PomBase" id="SPAC27D7.03c">
    <property type="gene designation" value="mei2"/>
</dbReference>
<dbReference type="VEuPathDB" id="FungiDB:SPAC27D7.03c"/>
<dbReference type="eggNOG" id="KOG4660">
    <property type="taxonomic scope" value="Eukaryota"/>
</dbReference>
<dbReference type="HOGENOM" id="CLU_370943_0_0_1"/>
<dbReference type="InParanoid" id="P08965"/>
<dbReference type="OMA" id="ICDISYA"/>
<dbReference type="PhylomeDB" id="P08965"/>
<dbReference type="PRO" id="PR:P08965"/>
<dbReference type="Proteomes" id="UP000002485">
    <property type="component" value="Chromosome I"/>
</dbReference>
<dbReference type="GO" id="GO:0005737">
    <property type="term" value="C:cytoplasm"/>
    <property type="evidence" value="ECO:0000314"/>
    <property type="project" value="PomBase"/>
</dbReference>
<dbReference type="GO" id="GO:0005829">
    <property type="term" value="C:cytosol"/>
    <property type="evidence" value="ECO:0007005"/>
    <property type="project" value="PomBase"/>
</dbReference>
<dbReference type="GO" id="GO:0033620">
    <property type="term" value="C:Mei2 nuclear dot complex"/>
    <property type="evidence" value="ECO:0000314"/>
    <property type="project" value="PomBase"/>
</dbReference>
<dbReference type="GO" id="GO:0000228">
    <property type="term" value="C:nuclear chromosome"/>
    <property type="evidence" value="ECO:0000314"/>
    <property type="project" value="PomBase"/>
</dbReference>
<dbReference type="GO" id="GO:0005634">
    <property type="term" value="C:nucleus"/>
    <property type="evidence" value="ECO:0000314"/>
    <property type="project" value="PomBase"/>
</dbReference>
<dbReference type="GO" id="GO:0034064">
    <property type="term" value="C:Tor2-Mei2-Ste11 complex"/>
    <property type="evidence" value="ECO:0000314"/>
    <property type="project" value="PomBase"/>
</dbReference>
<dbReference type="GO" id="GO:0106222">
    <property type="term" value="F:lncRNA binding"/>
    <property type="evidence" value="ECO:0000353"/>
    <property type="project" value="PomBase"/>
</dbReference>
<dbReference type="GO" id="GO:0008266">
    <property type="term" value="F:poly(U) RNA binding"/>
    <property type="evidence" value="ECO:0000353"/>
    <property type="project" value="PomBase"/>
</dbReference>
<dbReference type="GO" id="GO:0140311">
    <property type="term" value="F:protein sequestering activity"/>
    <property type="evidence" value="ECO:0000269"/>
    <property type="project" value="PomBase"/>
</dbReference>
<dbReference type="GO" id="GO:0003723">
    <property type="term" value="F:RNA binding"/>
    <property type="evidence" value="ECO:0000318"/>
    <property type="project" value="GO_Central"/>
</dbReference>
<dbReference type="GO" id="GO:0051728">
    <property type="term" value="P:cell cycle switching, mitotic to meiotic cell cycle"/>
    <property type="evidence" value="ECO:0000315"/>
    <property type="project" value="PomBase"/>
</dbReference>
<dbReference type="GO" id="GO:0051321">
    <property type="term" value="P:meiotic cell cycle"/>
    <property type="evidence" value="ECO:0007669"/>
    <property type="project" value="UniProtKB-KW"/>
</dbReference>
<dbReference type="GO" id="GO:0140538">
    <property type="term" value="P:negative regulation of conjugation with zygote"/>
    <property type="evidence" value="ECO:0000315"/>
    <property type="project" value="PomBase"/>
</dbReference>
<dbReference type="GO" id="GO:0051446">
    <property type="term" value="P:positive regulation of meiotic cell cycle"/>
    <property type="evidence" value="ECO:0000315"/>
    <property type="project" value="PomBase"/>
</dbReference>
<dbReference type="GO" id="GO:1905191">
    <property type="term" value="P:positive regulation of metaphase/anaphase transition of meiosis II"/>
    <property type="evidence" value="ECO:0000315"/>
    <property type="project" value="PomBase"/>
</dbReference>
<dbReference type="CDD" id="cd12528">
    <property type="entry name" value="RRM2_MEI2_fungi"/>
    <property type="match status" value="1"/>
</dbReference>
<dbReference type="CDD" id="cd12532">
    <property type="entry name" value="RRM3_MEI2_fungi"/>
    <property type="match status" value="1"/>
</dbReference>
<dbReference type="Gene3D" id="3.30.70.330">
    <property type="match status" value="1"/>
</dbReference>
<dbReference type="InterPro" id="IPR034863">
    <property type="entry name" value="Fungal_Mei2-like_RRM2"/>
</dbReference>
<dbReference type="InterPro" id="IPR034862">
    <property type="entry name" value="Fungal_Mei2-like_RRM3"/>
</dbReference>
<dbReference type="InterPro" id="IPR007201">
    <property type="entry name" value="Mei2-like_Rrm_C"/>
</dbReference>
<dbReference type="InterPro" id="IPR012677">
    <property type="entry name" value="Nucleotide-bd_a/b_plait_sf"/>
</dbReference>
<dbReference type="InterPro" id="IPR035979">
    <property type="entry name" value="RBD_domain_sf"/>
</dbReference>
<dbReference type="InterPro" id="IPR000504">
    <property type="entry name" value="RRM_dom"/>
</dbReference>
<dbReference type="PANTHER" id="PTHR23189">
    <property type="entry name" value="RNA RECOGNITION MOTIF-CONTAINING"/>
    <property type="match status" value="1"/>
</dbReference>
<dbReference type="Pfam" id="PF00076">
    <property type="entry name" value="RRM_1"/>
    <property type="match status" value="1"/>
</dbReference>
<dbReference type="Pfam" id="PF04059">
    <property type="entry name" value="RRM_2"/>
    <property type="match status" value="1"/>
</dbReference>
<dbReference type="SMART" id="SM00360">
    <property type="entry name" value="RRM"/>
    <property type="match status" value="1"/>
</dbReference>
<dbReference type="SUPFAM" id="SSF54928">
    <property type="entry name" value="RNA-binding domain, RBD"/>
    <property type="match status" value="2"/>
</dbReference>
<dbReference type="PROSITE" id="PS50102">
    <property type="entry name" value="RRM"/>
    <property type="match status" value="1"/>
</dbReference>
<protein>
    <recommendedName>
        <fullName>Meiosis protein mei2</fullName>
    </recommendedName>
</protein>
<proteinExistence type="evidence at protein level"/>
<name>MEI2_SCHPO</name>
<gene>
    <name type="primary">mei2</name>
    <name type="ORF">SPAC27D7.03c</name>
</gene>
<sequence length="750" mass="82677">MIMETESPLSITSPSPSDSTFQVDMEKTMHALPSSLLDSPLLSTNEHYPPKSTLLLSGPSPIRNIQLSATKSSESNSIDYLTDTQNIFPNFVNNENNYQFSTAPLNPIDACRVGERKVFTTGNVLLSADRQPLSTWQQNISVLSESPPQNGIQSYISSSEQAAQALTRKPSVTGFRSSSLNSNSDDIDIFSHASRYLFVTNLPRIVPYATLLELFSKLGDVKGIDTSSLSTDGICIVAFFDIRQAIQAAKSLRSQRFFNDRLLYFQFCQRSSIQKMINQGATIQFLDDNEGQLLLNMQGGSVLSILQLQSILQTFGPLLIMKPLRSQNVSQIICEFYDTRDASFALDELDGRIIHNCCLQVAYYDAMADSVSTSSASSLSVPRGFSGMLNNNSEWNNSMTMSSNQETPTAASCAVSRIGSSYGMSNNFGSVPLGRTESSPAWGTSGYYDVSSTSPVAPSDRNPSRQYNSIRYGLDVNPIAPPNSSRLKQRNSDLLNGINPQWSPFSSNTGKVFDSPTGSLGMRRSLTVGANASCSNPTNLSFASLTLHDSKADSTLSASSLNPDLNLQRYTPTVEKHASDRNSVDYAQIASGIDTRTTVMIKNIPNKFTQQMLRDYIDVTNKGTYDFLYLRIDFVNKCNVGYAFINFIEPQSIITFGKARVGTQWNVFHSEKICDISYANIQGKDRLIEKFRNSCVMDENPAYRPKIFVSHGPNRGMEEPFPAPNNARRKLRSIASAQQIGLFPPTASKC</sequence>
<keyword id="KW-0002">3D-structure</keyword>
<keyword id="KW-0469">Meiosis</keyword>
<keyword id="KW-0597">Phosphoprotein</keyword>
<keyword id="KW-1185">Reference proteome</keyword>
<keyword id="KW-0677">Repeat</keyword>
<keyword id="KW-0694">RNA-binding</keyword>
<keyword id="KW-0346">Stress response</keyword>